<proteinExistence type="evidence at protein level"/>
<sequence>MNRLKEKYVKEVVPALMSKFNYKSIMQVPKIEKIVINMGVGDAVQNPKALDSAVEELTLIAGQRPVVTRAKKSIAGFRLRQGMPIGAKVTLRGERMYEFLDKLISVSLPRVRDFRGVSKKAFDGRGNYTLGIKEQLIFPEIDYDKVNKVRGMDIVIVTTANTDEEARELLALLGMPFQK</sequence>
<name>RL5_GEOSE</name>
<feature type="chain" id="PRO_0000124891" description="Large ribosomal subunit protein uL5">
    <location>
        <begin position="1"/>
        <end position="179"/>
    </location>
</feature>
<feature type="mutagenesis site" description="A 3-fold decrease in binding of the 5S rRNA.">
    <original>K</original>
    <variation>A</variation>
    <location>
        <position position="33"/>
    </location>
</feature>
<feature type="mutagenesis site" description="A 25-fold decrease in binding of the 5S rRNA.">
    <original>N</original>
    <variation>A</variation>
    <location>
        <position position="37"/>
    </location>
</feature>
<feature type="mutagenesis site" description="A 12.5-fold decrease in binding of the 5S rRNA.">
    <original>Q</original>
    <variation>A</variation>
    <location>
        <position position="63"/>
    </location>
</feature>
<feature type="mutagenesis site" description="An 8-fold decrease in binding of the 5S rRNA.">
    <original>F</original>
    <variation>A</variation>
    <location>
        <position position="77"/>
    </location>
</feature>
<feature type="mutagenesis site" description="A 4-fold decrease in binding of the 5S rRNA.">
    <original>T</original>
    <variation>A</variation>
    <location>
        <position position="90"/>
    </location>
</feature>
<feature type="helix" evidence="4">
    <location>
        <begin position="3"/>
        <end position="10"/>
    </location>
</feature>
<feature type="helix" evidence="4">
    <location>
        <begin position="12"/>
        <end position="20"/>
    </location>
</feature>
<feature type="helix" evidence="4">
    <location>
        <begin position="25"/>
        <end position="27"/>
    </location>
</feature>
<feature type="strand" evidence="4">
    <location>
        <begin position="31"/>
        <end position="39"/>
    </location>
</feature>
<feature type="strand" evidence="4">
    <location>
        <begin position="43"/>
        <end position="45"/>
    </location>
</feature>
<feature type="helix" evidence="4">
    <location>
        <begin position="47"/>
        <end position="61"/>
    </location>
</feature>
<feature type="strand" evidence="4">
    <location>
        <begin position="66"/>
        <end position="69"/>
    </location>
</feature>
<feature type="strand" evidence="4">
    <location>
        <begin position="76"/>
        <end position="78"/>
    </location>
</feature>
<feature type="strand" evidence="4">
    <location>
        <begin position="84"/>
        <end position="91"/>
    </location>
</feature>
<feature type="helix" evidence="4">
    <location>
        <begin position="93"/>
        <end position="105"/>
    </location>
</feature>
<feature type="helix" evidence="4">
    <location>
        <begin position="108"/>
        <end position="110"/>
    </location>
</feature>
<feature type="strand" evidence="4">
    <location>
        <begin position="124"/>
        <end position="133"/>
    </location>
</feature>
<feature type="helix" evidence="4">
    <location>
        <begin position="135"/>
        <end position="137"/>
    </location>
</feature>
<feature type="helix" evidence="4">
    <location>
        <begin position="143"/>
        <end position="145"/>
    </location>
</feature>
<feature type="strand" evidence="4">
    <location>
        <begin position="152"/>
        <end position="159"/>
    </location>
</feature>
<feature type="helix" evidence="4">
    <location>
        <begin position="163"/>
        <end position="173"/>
    </location>
</feature>
<reference key="1">
    <citation type="journal article" date="1987" name="FEBS Lett.">
        <title>The complete amino acid sequences of the 5 S rRNA binding proteins L5 and L18 from the moderate thermophile Bacillus stearothermophilus ribosome.</title>
        <authorList>
            <person name="Kimura J."/>
            <person name="Kimura M."/>
        </authorList>
    </citation>
    <scope>PROTEIN SEQUENCE</scope>
    <source>
        <strain>ATCC 29609 / DSM 2027 / NCA 1503 / NCIMB 8924</strain>
    </source>
</reference>
<reference key="2">
    <citation type="journal article" date="1972" name="Mol. Gen. Genet.">
        <title>Isolation and characterization of 5S RNA-protein complexes from Bacillus stearothermophilus and Escherichia coli ribosomes.</title>
        <authorList>
            <person name="Horne J.R."/>
            <person name="Erdmann V.A."/>
        </authorList>
    </citation>
    <scope>ISOLATION OF 5S RNA-PROTEIN COMPLEXES</scope>
</reference>
<reference key="3">
    <citation type="journal article" date="2002" name="Biosci. Biotechnol. Biochem.">
        <title>On the interaction of ribosomal protein L5 with 5S rRNA.</title>
        <authorList>
            <person name="Iwasaki K."/>
            <person name="Kikukawa S."/>
            <person name="Kawamura S."/>
            <person name="Kouzuma Y."/>
            <person name="Tanaka I."/>
            <person name="Kimura M."/>
        </authorList>
    </citation>
    <scope>MUTAGENESIS OF CONSERVED RESIDUES</scope>
    <scope>MASS SPECTROMETRY</scope>
</reference>
<reference key="4">
    <citation type="journal article" date="2001" name="RNA">
        <title>Ribosomal protein L5 has a highly twisted concave surface and flexible arms responsible for rRNA binding.</title>
        <authorList>
            <person name="Nakashima T."/>
            <person name="Yao M."/>
            <person name="Kawamura S."/>
            <person name="Iwasaki K."/>
            <person name="Kimura M."/>
            <person name="Tanaka I."/>
        </authorList>
    </citation>
    <scope>X-RAY CRYSTALLOGRAPHY (1.8 ANGSTROMS)</scope>
    <scope>MUTAGENESIS</scope>
</reference>
<gene>
    <name type="primary">rplE</name>
</gene>
<keyword id="KW-0002">3D-structure</keyword>
<keyword id="KW-0903">Direct protein sequencing</keyword>
<keyword id="KW-0687">Ribonucleoprotein</keyword>
<keyword id="KW-0689">Ribosomal protein</keyword>
<keyword id="KW-0694">RNA-binding</keyword>
<keyword id="KW-0699">rRNA-binding</keyword>
<keyword id="KW-0820">tRNA-binding</keyword>
<organism>
    <name type="scientific">Geobacillus stearothermophilus</name>
    <name type="common">Bacillus stearothermophilus</name>
    <dbReference type="NCBI Taxonomy" id="1422"/>
    <lineage>
        <taxon>Bacteria</taxon>
        <taxon>Bacillati</taxon>
        <taxon>Bacillota</taxon>
        <taxon>Bacilli</taxon>
        <taxon>Bacillales</taxon>
        <taxon>Anoxybacillaceae</taxon>
        <taxon>Geobacillus</taxon>
    </lineage>
</organism>
<evidence type="ECO:0000250" key="1"/>
<evidence type="ECO:0000269" key="2">
    <source>
    </source>
</evidence>
<evidence type="ECO:0000305" key="3"/>
<evidence type="ECO:0007829" key="4">
    <source>
        <dbReference type="PDB" id="1IQ4"/>
    </source>
</evidence>
<protein>
    <recommendedName>
        <fullName evidence="3">Large ribosomal subunit protein uL5</fullName>
    </recommendedName>
    <alternativeName>
        <fullName>50S ribosomal protein L5</fullName>
        <shortName>BL5</shortName>
        <shortName>BstL5</shortName>
    </alternativeName>
</protein>
<dbReference type="PIR" id="A29102">
    <property type="entry name" value="R5BS5F"/>
</dbReference>
<dbReference type="RefSeq" id="WP_033008675.1">
    <property type="nucleotide sequence ID" value="NZ_RCTK01000011.1"/>
</dbReference>
<dbReference type="PDB" id="1IQ4">
    <property type="method" value="X-ray"/>
    <property type="resolution" value="1.80 A"/>
    <property type="chains" value="A/B=1-179"/>
</dbReference>
<dbReference type="PDBsum" id="1IQ4"/>
<dbReference type="SMR" id="P08895"/>
<dbReference type="GeneID" id="89612888"/>
<dbReference type="OrthoDB" id="9806626at2"/>
<dbReference type="EvolutionaryTrace" id="P08895"/>
<dbReference type="GO" id="GO:1990904">
    <property type="term" value="C:ribonucleoprotein complex"/>
    <property type="evidence" value="ECO:0007669"/>
    <property type="project" value="UniProtKB-KW"/>
</dbReference>
<dbReference type="GO" id="GO:0005840">
    <property type="term" value="C:ribosome"/>
    <property type="evidence" value="ECO:0007669"/>
    <property type="project" value="UniProtKB-KW"/>
</dbReference>
<dbReference type="GO" id="GO:0019843">
    <property type="term" value="F:rRNA binding"/>
    <property type="evidence" value="ECO:0007669"/>
    <property type="project" value="UniProtKB-UniRule"/>
</dbReference>
<dbReference type="GO" id="GO:0003735">
    <property type="term" value="F:structural constituent of ribosome"/>
    <property type="evidence" value="ECO:0007669"/>
    <property type="project" value="InterPro"/>
</dbReference>
<dbReference type="GO" id="GO:0000049">
    <property type="term" value="F:tRNA binding"/>
    <property type="evidence" value="ECO:0007669"/>
    <property type="project" value="UniProtKB-UniRule"/>
</dbReference>
<dbReference type="GO" id="GO:0006412">
    <property type="term" value="P:translation"/>
    <property type="evidence" value="ECO:0007669"/>
    <property type="project" value="UniProtKB-UniRule"/>
</dbReference>
<dbReference type="FunFam" id="3.30.1440.10:FF:000001">
    <property type="entry name" value="50S ribosomal protein L5"/>
    <property type="match status" value="1"/>
</dbReference>
<dbReference type="Gene3D" id="3.30.1440.10">
    <property type="match status" value="1"/>
</dbReference>
<dbReference type="HAMAP" id="MF_01333_B">
    <property type="entry name" value="Ribosomal_uL5_B"/>
    <property type="match status" value="1"/>
</dbReference>
<dbReference type="InterPro" id="IPR002132">
    <property type="entry name" value="Ribosomal_uL5"/>
</dbReference>
<dbReference type="InterPro" id="IPR020930">
    <property type="entry name" value="Ribosomal_uL5_bac-type"/>
</dbReference>
<dbReference type="InterPro" id="IPR031309">
    <property type="entry name" value="Ribosomal_uL5_C"/>
</dbReference>
<dbReference type="InterPro" id="IPR020929">
    <property type="entry name" value="Ribosomal_uL5_CS"/>
</dbReference>
<dbReference type="InterPro" id="IPR022803">
    <property type="entry name" value="Ribosomal_uL5_dom_sf"/>
</dbReference>
<dbReference type="InterPro" id="IPR031310">
    <property type="entry name" value="Ribosomal_uL5_N"/>
</dbReference>
<dbReference type="NCBIfam" id="NF000585">
    <property type="entry name" value="PRK00010.1"/>
    <property type="match status" value="1"/>
</dbReference>
<dbReference type="PANTHER" id="PTHR11994">
    <property type="entry name" value="60S RIBOSOMAL PROTEIN L11-RELATED"/>
    <property type="match status" value="1"/>
</dbReference>
<dbReference type="Pfam" id="PF00281">
    <property type="entry name" value="Ribosomal_L5"/>
    <property type="match status" value="1"/>
</dbReference>
<dbReference type="Pfam" id="PF00673">
    <property type="entry name" value="Ribosomal_L5_C"/>
    <property type="match status" value="1"/>
</dbReference>
<dbReference type="PIRSF" id="PIRSF002161">
    <property type="entry name" value="Ribosomal_L5"/>
    <property type="match status" value="1"/>
</dbReference>
<dbReference type="SUPFAM" id="SSF55282">
    <property type="entry name" value="RL5-like"/>
    <property type="match status" value="1"/>
</dbReference>
<dbReference type="PROSITE" id="PS00358">
    <property type="entry name" value="RIBOSOMAL_L5"/>
    <property type="match status" value="1"/>
</dbReference>
<accession>P08895</accession>
<comment type="function">
    <text evidence="1">This is one of the proteins that bind and probably mediate the attachment of the 5S RNA into the large ribosomal subunit, where it forms part of the central protuberance. In the 70S ribosome it contacts protein S13 of the 30S subunit (bridge B1b), connecting the 2 subunits; this bridge is implicated in subunit movement. Contacts the P site tRNA; the 5S rRNA and some of its associated proteins might help stabilize positioning of ribosome-bound tRNAs (By similarity).</text>
</comment>
<comment type="subunit">
    <text evidence="1">Contacts the P site tRNA. Forms a bridge to the 30S subunit in the 70S ribosome (By similarity). Part of the 50S ribosomal subunit. Part of the 5S rRNA/L5/L18 subcomplex; in this organism only 2 proteins, L5 and L18 have been shown to be part of the 5S rRNA subcomplex, unlike E.coli and T.thermophilus where L25 (TL5) is also found. Has been shown to bind 5S rRNA.</text>
</comment>
<comment type="mass spectrometry"/>
<comment type="similarity">
    <text evidence="3">Belongs to the universal ribosomal protein uL5 family.</text>
</comment>